<evidence type="ECO:0000255" key="1">
    <source>
        <dbReference type="HAMAP-Rule" id="MF_01687"/>
    </source>
</evidence>
<sequence>MFTASPMSLSKILARRDWENPGVTQWHRLPAHAPFNSWRDEASARADDNASRKRSLNGDWQFSYYAAPEQVPDSWVTEDCADAVTTPVPSNWQMQGFDTPIYTNVTYPIPVNPPFVPAENPTGCYSLTFEVDEQWLESGQTRIVFDGVNSAFYLWCNGKWMGYSQDSRLPAEFDLSAVLRPGTNRLAVLVLRWCDGSYLEDQDMWRMSGIFRDVSLLHKPHTHIADYHAVTELNADYDRAKLQVEVALAGEQFADCEVTVTLWRDGLSVATASAKPGSAIIDERGNWAERLNVTLPVNDPALWSAETPELYRLTFALRDGQGEILDVEACDVGFRCVEISNGLLKVNGKPLLIRGVNRHEHHPENGQVMDEATMRRDIELMKQHNFNAVRCSHYPNHPLWYTLCDRYGLYVVDEANIETHGMVPMSRLADDPRWLPAMSERVTRMVLRDRNHPSIIIWSLGNESGHGANHDALYRWVKTTDPTRPVQYEGGGANTAATDIVCPMYARVDQDQPFEAVPKWSLKKWIGMPDETRPLILCEYAHAMGNSFGGFAKYWQAFRNHPRLQGGFVWDWVDQALTKKDDNGNAFWAYGGDFGDTPNDRQFCLNGLVFPDRTPHPALFEAQRAQQFFNFTLVSTSPLVIDVHSDYLFRQCDNEQLRWNIARDGEVLASGEVALTIAPQQTQRIEIDAPEFAAAAGEIWLNVDIVQTAATAWSPADHRCAWDQWQLPAPLYIAPPVEGTAKPDLKVKEDVLEVSHQSQRWHFDRASGNLTQWWNNGTATLLAPLNDNFTRAPLDNDIGVSEATRIDPNAWVERWKAAGMYNLTPRLLLCEGEQLAQAVTITTLHAWESNGKALFLSRKVWKIDRAGVLHGDVQVQVANDIPQPARIGLSCQLAQTPQTASWLGLGPDENYPDRKLAARQGRWTLPLDALHTAYIFPTDNGLRCDTRELTFDTHQLQGDFHFSLSRYSQQQLRDTSHHHLLEAEPGCWLNIDAFHMGVGGDDSWSPSVSPEFILQRREMRYAFSWRQD</sequence>
<protein>
    <recommendedName>
        <fullName evidence="1">Beta-galactosidase</fullName>
        <shortName evidence="1">Beta-gal</shortName>
        <ecNumber evidence="1">3.2.1.23</ecNumber>
    </recommendedName>
    <alternativeName>
        <fullName evidence="1">Lactase</fullName>
    </alternativeName>
</protein>
<reference key="1">
    <citation type="journal article" date="2010" name="PLoS Genet.">
        <title>Genome sequence of the plant growth promoting endophytic bacterium Enterobacter sp. 638.</title>
        <authorList>
            <person name="Taghavi S."/>
            <person name="van der Lelie D."/>
            <person name="Hoffman A."/>
            <person name="Zhang Y.B."/>
            <person name="Walla M.D."/>
            <person name="Vangronsveld J."/>
            <person name="Newman L."/>
            <person name="Monchy S."/>
        </authorList>
    </citation>
    <scope>NUCLEOTIDE SEQUENCE [LARGE SCALE GENOMIC DNA]</scope>
    <source>
        <strain>638</strain>
    </source>
</reference>
<organism>
    <name type="scientific">Enterobacter sp. (strain 638)</name>
    <dbReference type="NCBI Taxonomy" id="399742"/>
    <lineage>
        <taxon>Bacteria</taxon>
        <taxon>Pseudomonadati</taxon>
        <taxon>Pseudomonadota</taxon>
        <taxon>Gammaproteobacteria</taxon>
        <taxon>Enterobacterales</taxon>
        <taxon>Enterobacteriaceae</taxon>
        <taxon>Enterobacter</taxon>
    </lineage>
</organism>
<keyword id="KW-0326">Glycosidase</keyword>
<keyword id="KW-0378">Hydrolase</keyword>
<keyword id="KW-0460">Magnesium</keyword>
<keyword id="KW-0479">Metal-binding</keyword>
<keyword id="KW-0915">Sodium</keyword>
<gene>
    <name evidence="1" type="primary">lacZ</name>
    <name type="ordered locus">Ent638_0928</name>
</gene>
<proteinExistence type="inferred from homology"/>
<comment type="catalytic activity">
    <reaction evidence="1">
        <text>Hydrolysis of terminal non-reducing beta-D-galactose residues in beta-D-galactosides.</text>
        <dbReference type="EC" id="3.2.1.23"/>
    </reaction>
</comment>
<comment type="cofactor">
    <cofactor evidence="1">
        <name>Mg(2+)</name>
        <dbReference type="ChEBI" id="CHEBI:18420"/>
    </cofactor>
    <text evidence="1">Binds 2 magnesium ions per monomer.</text>
</comment>
<comment type="cofactor">
    <cofactor evidence="1">
        <name>Na(+)</name>
        <dbReference type="ChEBI" id="CHEBI:29101"/>
    </cofactor>
    <text evidence="1">Binds 1 sodium ion per monomer.</text>
</comment>
<comment type="subunit">
    <text evidence="1">Homotetramer.</text>
</comment>
<comment type="similarity">
    <text evidence="1">Belongs to the glycosyl hydrolase 2 family.</text>
</comment>
<accession>A4W7D2</accession>
<feature type="chain" id="PRO_0000366985" description="Beta-galactosidase">
    <location>
        <begin position="1"/>
        <end position="1028"/>
    </location>
</feature>
<feature type="active site" description="Proton donor" evidence="1">
    <location>
        <position position="463"/>
    </location>
</feature>
<feature type="active site" description="Nucleophile" evidence="1">
    <location>
        <position position="539"/>
    </location>
</feature>
<feature type="binding site" evidence="1">
    <location>
        <position position="104"/>
    </location>
    <ligand>
        <name>substrate</name>
    </ligand>
</feature>
<feature type="binding site" evidence="1">
    <location>
        <position position="203"/>
    </location>
    <ligand>
        <name>Na(+)</name>
        <dbReference type="ChEBI" id="CHEBI:29101"/>
    </ligand>
</feature>
<feature type="binding site" evidence="1">
    <location>
        <position position="203"/>
    </location>
    <ligand>
        <name>substrate</name>
    </ligand>
</feature>
<feature type="binding site" evidence="1">
    <location>
        <position position="418"/>
    </location>
    <ligand>
        <name>Mg(2+)</name>
        <dbReference type="ChEBI" id="CHEBI:18420"/>
        <label>1</label>
    </ligand>
</feature>
<feature type="binding site" evidence="1">
    <location>
        <position position="420"/>
    </location>
    <ligand>
        <name>Mg(2+)</name>
        <dbReference type="ChEBI" id="CHEBI:18420"/>
        <label>1</label>
    </ligand>
</feature>
<feature type="binding site" evidence="1">
    <location>
        <position position="463"/>
    </location>
    <ligand>
        <name>Mg(2+)</name>
        <dbReference type="ChEBI" id="CHEBI:18420"/>
        <label>1</label>
    </ligand>
</feature>
<feature type="binding site" evidence="1">
    <location>
        <position position="463"/>
    </location>
    <ligand>
        <name>substrate</name>
    </ligand>
</feature>
<feature type="binding site" evidence="1">
    <location>
        <begin position="539"/>
        <end position="542"/>
    </location>
    <ligand>
        <name>substrate</name>
    </ligand>
</feature>
<feature type="binding site" evidence="1">
    <location>
        <position position="599"/>
    </location>
    <ligand>
        <name>Mg(2+)</name>
        <dbReference type="ChEBI" id="CHEBI:18420"/>
        <label>2</label>
    </ligand>
</feature>
<feature type="binding site" evidence="1">
    <location>
        <position position="603"/>
    </location>
    <ligand>
        <name>Na(+)</name>
        <dbReference type="ChEBI" id="CHEBI:29101"/>
    </ligand>
</feature>
<feature type="binding site" evidence="1">
    <location>
        <position position="606"/>
    </location>
    <ligand>
        <name>Na(+)</name>
        <dbReference type="ChEBI" id="CHEBI:29101"/>
    </ligand>
</feature>
<feature type="binding site" evidence="1">
    <location>
        <position position="606"/>
    </location>
    <ligand>
        <name>substrate</name>
    </ligand>
</feature>
<feature type="binding site" evidence="1">
    <location>
        <position position="1004"/>
    </location>
    <ligand>
        <name>substrate</name>
    </ligand>
</feature>
<feature type="site" description="Transition state stabilizer" evidence="1">
    <location>
        <position position="359"/>
    </location>
</feature>
<feature type="site" description="Transition state stabilizer" evidence="1">
    <location>
        <position position="393"/>
    </location>
</feature>
<name>BGAL_ENT38</name>
<dbReference type="EC" id="3.2.1.23" evidence="1"/>
<dbReference type="EMBL" id="CP000653">
    <property type="protein sequence ID" value="ABP59612.1"/>
    <property type="molecule type" value="Genomic_DNA"/>
</dbReference>
<dbReference type="RefSeq" id="WP_012016333.1">
    <property type="nucleotide sequence ID" value="NC_009436.1"/>
</dbReference>
<dbReference type="SMR" id="A4W7D2"/>
<dbReference type="STRING" id="399742.Ent638_0928"/>
<dbReference type="CAZy" id="GH2">
    <property type="family name" value="Glycoside Hydrolase Family 2"/>
</dbReference>
<dbReference type="KEGG" id="ent:Ent638_0928"/>
<dbReference type="eggNOG" id="COG3250">
    <property type="taxonomic scope" value="Bacteria"/>
</dbReference>
<dbReference type="HOGENOM" id="CLU_002346_0_2_6"/>
<dbReference type="OrthoDB" id="9758603at2"/>
<dbReference type="Proteomes" id="UP000000230">
    <property type="component" value="Chromosome"/>
</dbReference>
<dbReference type="GO" id="GO:0009341">
    <property type="term" value="C:beta-galactosidase complex"/>
    <property type="evidence" value="ECO:0007669"/>
    <property type="project" value="InterPro"/>
</dbReference>
<dbReference type="GO" id="GO:0004565">
    <property type="term" value="F:beta-galactosidase activity"/>
    <property type="evidence" value="ECO:0007669"/>
    <property type="project" value="UniProtKB-EC"/>
</dbReference>
<dbReference type="GO" id="GO:0030246">
    <property type="term" value="F:carbohydrate binding"/>
    <property type="evidence" value="ECO:0007669"/>
    <property type="project" value="InterPro"/>
</dbReference>
<dbReference type="GO" id="GO:0000287">
    <property type="term" value="F:magnesium ion binding"/>
    <property type="evidence" value="ECO:0007669"/>
    <property type="project" value="UniProtKB-UniRule"/>
</dbReference>
<dbReference type="GO" id="GO:0005990">
    <property type="term" value="P:lactose catabolic process"/>
    <property type="evidence" value="ECO:0007669"/>
    <property type="project" value="TreeGrafter"/>
</dbReference>
<dbReference type="FunFam" id="2.60.40.10:FF:000680">
    <property type="entry name" value="Beta-galactosidase"/>
    <property type="match status" value="1"/>
</dbReference>
<dbReference type="FunFam" id="3.20.20.80:FF:000018">
    <property type="entry name" value="Beta-galactosidase"/>
    <property type="match status" value="1"/>
</dbReference>
<dbReference type="Gene3D" id="2.70.98.10">
    <property type="match status" value="1"/>
</dbReference>
<dbReference type="Gene3D" id="2.60.120.260">
    <property type="entry name" value="Galactose-binding domain-like"/>
    <property type="match status" value="1"/>
</dbReference>
<dbReference type="Gene3D" id="3.20.20.80">
    <property type="entry name" value="Glycosidases"/>
    <property type="match status" value="1"/>
</dbReference>
<dbReference type="Gene3D" id="2.60.40.10">
    <property type="entry name" value="Immunoglobulins"/>
    <property type="match status" value="2"/>
</dbReference>
<dbReference type="HAMAP" id="MF_01687">
    <property type="entry name" value="Beta_gal"/>
    <property type="match status" value="1"/>
</dbReference>
<dbReference type="InterPro" id="IPR004199">
    <property type="entry name" value="B-gal_small/dom_5"/>
</dbReference>
<dbReference type="InterPro" id="IPR050347">
    <property type="entry name" value="Bact_Beta-galactosidase"/>
</dbReference>
<dbReference type="InterPro" id="IPR036156">
    <property type="entry name" value="Beta-gal/glucu_dom_sf"/>
</dbReference>
<dbReference type="InterPro" id="IPR011013">
    <property type="entry name" value="Gal_mutarotase_sf_dom"/>
</dbReference>
<dbReference type="InterPro" id="IPR008979">
    <property type="entry name" value="Galactose-bd-like_sf"/>
</dbReference>
<dbReference type="InterPro" id="IPR014718">
    <property type="entry name" value="GH-type_carb-bd"/>
</dbReference>
<dbReference type="InterPro" id="IPR006101">
    <property type="entry name" value="Glyco_hydro_2"/>
</dbReference>
<dbReference type="InterPro" id="IPR023232">
    <property type="entry name" value="Glyco_hydro_2_AS"/>
</dbReference>
<dbReference type="InterPro" id="IPR023933">
    <property type="entry name" value="Glyco_hydro_2_beta_Galsidase"/>
</dbReference>
<dbReference type="InterPro" id="IPR006103">
    <property type="entry name" value="Glyco_hydro_2_cat"/>
</dbReference>
<dbReference type="InterPro" id="IPR023230">
    <property type="entry name" value="Glyco_hydro_2_CS"/>
</dbReference>
<dbReference type="InterPro" id="IPR006102">
    <property type="entry name" value="Glyco_hydro_2_Ig-like"/>
</dbReference>
<dbReference type="InterPro" id="IPR006104">
    <property type="entry name" value="Glyco_hydro_2_N"/>
</dbReference>
<dbReference type="InterPro" id="IPR017853">
    <property type="entry name" value="Glycoside_hydrolase_SF"/>
</dbReference>
<dbReference type="InterPro" id="IPR013783">
    <property type="entry name" value="Ig-like_fold"/>
</dbReference>
<dbReference type="InterPro" id="IPR032312">
    <property type="entry name" value="LacZ_4"/>
</dbReference>
<dbReference type="NCBIfam" id="NF007074">
    <property type="entry name" value="PRK09525.1"/>
    <property type="match status" value="1"/>
</dbReference>
<dbReference type="PANTHER" id="PTHR46323">
    <property type="entry name" value="BETA-GALACTOSIDASE"/>
    <property type="match status" value="1"/>
</dbReference>
<dbReference type="PANTHER" id="PTHR46323:SF2">
    <property type="entry name" value="BETA-GALACTOSIDASE"/>
    <property type="match status" value="1"/>
</dbReference>
<dbReference type="Pfam" id="PF02929">
    <property type="entry name" value="Bgal_small_N"/>
    <property type="match status" value="1"/>
</dbReference>
<dbReference type="Pfam" id="PF00703">
    <property type="entry name" value="Glyco_hydro_2"/>
    <property type="match status" value="1"/>
</dbReference>
<dbReference type="Pfam" id="PF02836">
    <property type="entry name" value="Glyco_hydro_2_C"/>
    <property type="match status" value="1"/>
</dbReference>
<dbReference type="Pfam" id="PF02837">
    <property type="entry name" value="Glyco_hydro_2_N"/>
    <property type="match status" value="1"/>
</dbReference>
<dbReference type="Pfam" id="PF16353">
    <property type="entry name" value="LacZ_4"/>
    <property type="match status" value="1"/>
</dbReference>
<dbReference type="PRINTS" id="PR00132">
    <property type="entry name" value="GLHYDRLASE2"/>
</dbReference>
<dbReference type="SMART" id="SM01038">
    <property type="entry name" value="Bgal_small_N"/>
    <property type="match status" value="1"/>
</dbReference>
<dbReference type="SUPFAM" id="SSF51445">
    <property type="entry name" value="(Trans)glycosidases"/>
    <property type="match status" value="1"/>
</dbReference>
<dbReference type="SUPFAM" id="SSF49303">
    <property type="entry name" value="beta-Galactosidase/glucuronidase domain"/>
    <property type="match status" value="2"/>
</dbReference>
<dbReference type="SUPFAM" id="SSF74650">
    <property type="entry name" value="Galactose mutarotase-like"/>
    <property type="match status" value="1"/>
</dbReference>
<dbReference type="SUPFAM" id="SSF49785">
    <property type="entry name" value="Galactose-binding domain-like"/>
    <property type="match status" value="1"/>
</dbReference>
<dbReference type="PROSITE" id="PS00719">
    <property type="entry name" value="GLYCOSYL_HYDROL_F2_1"/>
    <property type="match status" value="1"/>
</dbReference>
<dbReference type="PROSITE" id="PS00608">
    <property type="entry name" value="GLYCOSYL_HYDROL_F2_2"/>
    <property type="match status" value="1"/>
</dbReference>